<gene>
    <name type="primary">FAM76A</name>
    <name type="ORF">RCJMB04_20f16</name>
</gene>
<name>FA76A_CHICK</name>
<organism>
    <name type="scientific">Gallus gallus</name>
    <name type="common">Chicken</name>
    <dbReference type="NCBI Taxonomy" id="9031"/>
    <lineage>
        <taxon>Eukaryota</taxon>
        <taxon>Metazoa</taxon>
        <taxon>Chordata</taxon>
        <taxon>Craniata</taxon>
        <taxon>Vertebrata</taxon>
        <taxon>Euteleostomi</taxon>
        <taxon>Archelosauria</taxon>
        <taxon>Archosauria</taxon>
        <taxon>Dinosauria</taxon>
        <taxon>Saurischia</taxon>
        <taxon>Theropoda</taxon>
        <taxon>Coelurosauria</taxon>
        <taxon>Aves</taxon>
        <taxon>Neognathae</taxon>
        <taxon>Galloanserae</taxon>
        <taxon>Galliformes</taxon>
        <taxon>Phasianidae</taxon>
        <taxon>Phasianinae</taxon>
        <taxon>Gallus</taxon>
    </lineage>
</organism>
<evidence type="ECO:0000255" key="1"/>
<evidence type="ECO:0000256" key="2">
    <source>
        <dbReference type="SAM" id="MobiDB-lite"/>
    </source>
</evidence>
<evidence type="ECO:0000305" key="3"/>
<sequence length="307" mass="34920">MAALYACTKCHQRFPFEALSQGQQLCKECRIAHPIVKCTYCRTEFQQESKTNTICKKCAQNVKLYGTPKPCQYCNIIAAFIGNKCQRCTNSEKKYGPPHSCEQCKQQCAFDRKDDRKKVDGKLLCWLCTLSYKRVLQKTKEQCKHLSSSSRASLQEKEQYSRLSSGSHYNSQKTLSTSSIQNEIPKKKAKFDAISANGDSFSPDLALDSPGTDHFVIIAQLKEEVATLKKMLHQKDQMILEKEKKITELKADLQYQESQMRAKMNQMEKTHKEVMEQLQAKNRELLKQAAALSKGKKPEKSGAITSP</sequence>
<reference key="1">
    <citation type="journal article" date="2005" name="Genome Biol.">
        <title>Full-length cDNAs from chicken bursal lymphocytes to facilitate gene function analysis.</title>
        <authorList>
            <person name="Caldwell R.B."/>
            <person name="Kierzek A.M."/>
            <person name="Arakawa H."/>
            <person name="Bezzubov Y."/>
            <person name="Zaim J."/>
            <person name="Fiedler P."/>
            <person name="Kutter S."/>
            <person name="Blagodatski A."/>
            <person name="Kostovska D."/>
            <person name="Koter M."/>
            <person name="Plachy J."/>
            <person name="Carninci P."/>
            <person name="Hayashizaki Y."/>
            <person name="Buerstedde J.-M."/>
        </authorList>
    </citation>
    <scope>NUCLEOTIDE SEQUENCE [LARGE SCALE MRNA]</scope>
    <source>
        <strain>CB</strain>
        <tissue>Bursa of Fabricius</tissue>
    </source>
</reference>
<comment type="similarity">
    <text evidence="3">Belongs to the FAM76 family.</text>
</comment>
<accession>Q5ZJ65</accession>
<dbReference type="EMBL" id="AJ720569">
    <property type="protein sequence ID" value="CAG32228.1"/>
    <property type="molecule type" value="mRNA"/>
</dbReference>
<dbReference type="RefSeq" id="NP_001026548.1">
    <property type="nucleotide sequence ID" value="NM_001031377.3"/>
</dbReference>
<dbReference type="SMR" id="Q5ZJ65"/>
<dbReference type="FunCoup" id="Q5ZJ65">
    <property type="interactions" value="1955"/>
</dbReference>
<dbReference type="PaxDb" id="9031-ENSGALP00000022731"/>
<dbReference type="GeneID" id="426384"/>
<dbReference type="KEGG" id="gga:426384"/>
<dbReference type="CTD" id="199870"/>
<dbReference type="VEuPathDB" id="HostDB:geneid_426384"/>
<dbReference type="eggNOG" id="KOG3990">
    <property type="taxonomic scope" value="Eukaryota"/>
</dbReference>
<dbReference type="InParanoid" id="Q5ZJ65"/>
<dbReference type="OrthoDB" id="3689at2759"/>
<dbReference type="PhylomeDB" id="Q5ZJ65"/>
<dbReference type="PRO" id="PR:Q5ZJ65"/>
<dbReference type="Proteomes" id="UP000000539">
    <property type="component" value="Unassembled WGS sequence"/>
</dbReference>
<dbReference type="GO" id="GO:0016607">
    <property type="term" value="C:nuclear speck"/>
    <property type="evidence" value="ECO:0000318"/>
    <property type="project" value="GO_Central"/>
</dbReference>
<dbReference type="GO" id="GO:0005654">
    <property type="term" value="C:nucleoplasm"/>
    <property type="evidence" value="ECO:0000250"/>
    <property type="project" value="UniProtKB"/>
</dbReference>
<dbReference type="InterPro" id="IPR032017">
    <property type="entry name" value="FAM76"/>
</dbReference>
<dbReference type="PANTHER" id="PTHR46176">
    <property type="entry name" value="LD21662P"/>
    <property type="match status" value="1"/>
</dbReference>
<dbReference type="PANTHER" id="PTHR46176:SF2">
    <property type="entry name" value="PROTEIN FAM76A"/>
    <property type="match status" value="1"/>
</dbReference>
<dbReference type="Pfam" id="PF16046">
    <property type="entry name" value="FAM76"/>
    <property type="match status" value="1"/>
</dbReference>
<feature type="chain" id="PRO_0000245762" description="Protein FAM76A">
    <location>
        <begin position="1"/>
        <end position="307"/>
    </location>
</feature>
<feature type="region of interest" description="Disordered" evidence="2">
    <location>
        <begin position="161"/>
        <end position="181"/>
    </location>
</feature>
<feature type="region of interest" description="Disordered" evidence="2">
    <location>
        <begin position="287"/>
        <end position="307"/>
    </location>
</feature>
<feature type="coiled-coil region" evidence="1">
    <location>
        <begin position="217"/>
        <end position="297"/>
    </location>
</feature>
<protein>
    <recommendedName>
        <fullName>Protein FAM76A</fullName>
    </recommendedName>
</protein>
<keyword id="KW-0175">Coiled coil</keyword>
<keyword id="KW-1185">Reference proteome</keyword>
<proteinExistence type="evidence at transcript level"/>